<organism>
    <name type="scientific">Salinispora arenicola (strain CNS-205)</name>
    <dbReference type="NCBI Taxonomy" id="391037"/>
    <lineage>
        <taxon>Bacteria</taxon>
        <taxon>Bacillati</taxon>
        <taxon>Actinomycetota</taxon>
        <taxon>Actinomycetes</taxon>
        <taxon>Micromonosporales</taxon>
        <taxon>Micromonosporaceae</taxon>
        <taxon>Salinispora</taxon>
    </lineage>
</organism>
<comment type="function">
    <text evidence="1">Catalyzes the interconversion of L-alanine and D-alanine. May also act on other amino acids.</text>
</comment>
<comment type="catalytic activity">
    <reaction evidence="1">
        <text>L-alanine = D-alanine</text>
        <dbReference type="Rhea" id="RHEA:20249"/>
        <dbReference type="ChEBI" id="CHEBI:57416"/>
        <dbReference type="ChEBI" id="CHEBI:57972"/>
        <dbReference type="EC" id="5.1.1.1"/>
    </reaction>
</comment>
<comment type="cofactor">
    <cofactor evidence="1">
        <name>pyridoxal 5'-phosphate</name>
        <dbReference type="ChEBI" id="CHEBI:597326"/>
    </cofactor>
</comment>
<comment type="pathway">
    <text evidence="1">Amino-acid biosynthesis; D-alanine biosynthesis; D-alanine from L-alanine: step 1/1.</text>
</comment>
<comment type="similarity">
    <text evidence="1">Belongs to the alanine racemase family.</text>
</comment>
<keyword id="KW-0413">Isomerase</keyword>
<keyword id="KW-0663">Pyridoxal phosphate</keyword>
<feature type="chain" id="PRO_1000085506" description="Alanine racemase">
    <location>
        <begin position="1"/>
        <end position="372"/>
    </location>
</feature>
<feature type="active site" description="Proton acceptor; specific for D-alanine" evidence="1">
    <location>
        <position position="33"/>
    </location>
</feature>
<feature type="active site" description="Proton acceptor; specific for L-alanine" evidence="1">
    <location>
        <position position="261"/>
    </location>
</feature>
<feature type="binding site" evidence="1">
    <location>
        <position position="131"/>
    </location>
    <ligand>
        <name>substrate</name>
    </ligand>
</feature>
<feature type="binding site" evidence="1">
    <location>
        <position position="309"/>
    </location>
    <ligand>
        <name>substrate</name>
    </ligand>
</feature>
<feature type="modified residue" description="N6-(pyridoxal phosphate)lysine" evidence="1">
    <location>
        <position position="33"/>
    </location>
</feature>
<name>ALR_SALAI</name>
<proteinExistence type="inferred from homology"/>
<gene>
    <name type="primary">alr</name>
    <name type="ordered locus">Sare_4247</name>
</gene>
<sequence>MWQAEVRVDLDAIRENVSWLRSGSAAELMAVVKGDGYGHGMVPAALAALDGGADWLGVCTLDEALTLRREGITAPILAWLLAPGLPLHEGVAAGIDLGAASVAQLDEMVQAGRTAGRPARLHLKIDTGLSRGGATVSDWPGLLTAAAKAQADGTVEVVGVWSHFVYADAPGHPTTDRQLAVFHEGLDMVEKAGLRPRYRHLANSAATLTRPDAHFDLVRPGLAVYGLSPVAGESFGLRPAMTARARVMLTKQVPAGAGVSYGHTYTTERDSTLAVIPLGYADGVPRSASNSGPVHLGGVRRTISGRVCMDQFVLDCGDDPVAPGDVAVLFGSGRNGEPTADDWAEAVGTINYEIVTRFGSTRVPRSYDGERP</sequence>
<dbReference type="EC" id="5.1.1.1" evidence="1"/>
<dbReference type="EMBL" id="CP000850">
    <property type="protein sequence ID" value="ABW00029.1"/>
    <property type="molecule type" value="Genomic_DNA"/>
</dbReference>
<dbReference type="SMR" id="A8M4B3"/>
<dbReference type="STRING" id="391037.Sare_4247"/>
<dbReference type="KEGG" id="saq:Sare_4247"/>
<dbReference type="PATRIC" id="fig|391037.6.peg.4287"/>
<dbReference type="eggNOG" id="COG0787">
    <property type="taxonomic scope" value="Bacteria"/>
</dbReference>
<dbReference type="HOGENOM" id="CLU_028393_0_0_11"/>
<dbReference type="OrthoDB" id="9813814at2"/>
<dbReference type="UniPathway" id="UPA00042">
    <property type="reaction ID" value="UER00497"/>
</dbReference>
<dbReference type="GO" id="GO:0005829">
    <property type="term" value="C:cytosol"/>
    <property type="evidence" value="ECO:0007669"/>
    <property type="project" value="TreeGrafter"/>
</dbReference>
<dbReference type="GO" id="GO:0008784">
    <property type="term" value="F:alanine racemase activity"/>
    <property type="evidence" value="ECO:0007669"/>
    <property type="project" value="UniProtKB-UniRule"/>
</dbReference>
<dbReference type="GO" id="GO:0030170">
    <property type="term" value="F:pyridoxal phosphate binding"/>
    <property type="evidence" value="ECO:0007669"/>
    <property type="project" value="UniProtKB-UniRule"/>
</dbReference>
<dbReference type="GO" id="GO:0030632">
    <property type="term" value="P:D-alanine biosynthetic process"/>
    <property type="evidence" value="ECO:0007669"/>
    <property type="project" value="UniProtKB-UniRule"/>
</dbReference>
<dbReference type="GO" id="GO:0009252">
    <property type="term" value="P:peptidoglycan biosynthetic process"/>
    <property type="evidence" value="ECO:0007669"/>
    <property type="project" value="TreeGrafter"/>
</dbReference>
<dbReference type="CDD" id="cd00430">
    <property type="entry name" value="PLPDE_III_AR"/>
    <property type="match status" value="1"/>
</dbReference>
<dbReference type="FunFam" id="2.40.37.10:FF:000015">
    <property type="entry name" value="Alanine racemase"/>
    <property type="match status" value="1"/>
</dbReference>
<dbReference type="FunFam" id="3.20.20.10:FF:000002">
    <property type="entry name" value="Alanine racemase"/>
    <property type="match status" value="1"/>
</dbReference>
<dbReference type="Gene3D" id="3.20.20.10">
    <property type="entry name" value="Alanine racemase"/>
    <property type="match status" value="1"/>
</dbReference>
<dbReference type="Gene3D" id="2.40.37.10">
    <property type="entry name" value="Lyase, Ornithine Decarboxylase, Chain A, domain 1"/>
    <property type="match status" value="1"/>
</dbReference>
<dbReference type="HAMAP" id="MF_01201">
    <property type="entry name" value="Ala_racemase"/>
    <property type="match status" value="1"/>
</dbReference>
<dbReference type="InterPro" id="IPR000821">
    <property type="entry name" value="Ala_racemase"/>
</dbReference>
<dbReference type="InterPro" id="IPR009006">
    <property type="entry name" value="Ala_racemase/Decarboxylase_C"/>
</dbReference>
<dbReference type="InterPro" id="IPR011079">
    <property type="entry name" value="Ala_racemase_C"/>
</dbReference>
<dbReference type="InterPro" id="IPR001608">
    <property type="entry name" value="Ala_racemase_N"/>
</dbReference>
<dbReference type="InterPro" id="IPR020622">
    <property type="entry name" value="Ala_racemase_pyridoxalP-BS"/>
</dbReference>
<dbReference type="InterPro" id="IPR029066">
    <property type="entry name" value="PLP-binding_barrel"/>
</dbReference>
<dbReference type="NCBIfam" id="TIGR00492">
    <property type="entry name" value="alr"/>
    <property type="match status" value="1"/>
</dbReference>
<dbReference type="PANTHER" id="PTHR30511">
    <property type="entry name" value="ALANINE RACEMASE"/>
    <property type="match status" value="1"/>
</dbReference>
<dbReference type="PANTHER" id="PTHR30511:SF0">
    <property type="entry name" value="ALANINE RACEMASE, CATABOLIC-RELATED"/>
    <property type="match status" value="1"/>
</dbReference>
<dbReference type="Pfam" id="PF00842">
    <property type="entry name" value="Ala_racemase_C"/>
    <property type="match status" value="1"/>
</dbReference>
<dbReference type="Pfam" id="PF01168">
    <property type="entry name" value="Ala_racemase_N"/>
    <property type="match status" value="1"/>
</dbReference>
<dbReference type="PRINTS" id="PR00992">
    <property type="entry name" value="ALARACEMASE"/>
</dbReference>
<dbReference type="SMART" id="SM01005">
    <property type="entry name" value="Ala_racemase_C"/>
    <property type="match status" value="1"/>
</dbReference>
<dbReference type="SUPFAM" id="SSF50621">
    <property type="entry name" value="Alanine racemase C-terminal domain-like"/>
    <property type="match status" value="1"/>
</dbReference>
<dbReference type="SUPFAM" id="SSF51419">
    <property type="entry name" value="PLP-binding barrel"/>
    <property type="match status" value="1"/>
</dbReference>
<dbReference type="PROSITE" id="PS00395">
    <property type="entry name" value="ALANINE_RACEMASE"/>
    <property type="match status" value="1"/>
</dbReference>
<reference key="1">
    <citation type="submission" date="2007-10" db="EMBL/GenBank/DDBJ databases">
        <title>Complete sequence of Salinispora arenicola CNS-205.</title>
        <authorList>
            <consortium name="US DOE Joint Genome Institute"/>
            <person name="Copeland A."/>
            <person name="Lucas S."/>
            <person name="Lapidus A."/>
            <person name="Barry K."/>
            <person name="Glavina del Rio T."/>
            <person name="Dalin E."/>
            <person name="Tice H."/>
            <person name="Pitluck S."/>
            <person name="Foster B."/>
            <person name="Schmutz J."/>
            <person name="Larimer F."/>
            <person name="Land M."/>
            <person name="Hauser L."/>
            <person name="Kyrpides N."/>
            <person name="Ivanova N."/>
            <person name="Jensen P.R."/>
            <person name="Moore B.S."/>
            <person name="Penn K."/>
            <person name="Jenkins C."/>
            <person name="Udwary D."/>
            <person name="Xiang L."/>
            <person name="Gontang E."/>
            <person name="Richardson P."/>
        </authorList>
    </citation>
    <scope>NUCLEOTIDE SEQUENCE [LARGE SCALE GENOMIC DNA]</scope>
    <source>
        <strain>CNS-205</strain>
    </source>
</reference>
<accession>A8M4B3</accession>
<evidence type="ECO:0000255" key="1">
    <source>
        <dbReference type="HAMAP-Rule" id="MF_01201"/>
    </source>
</evidence>
<protein>
    <recommendedName>
        <fullName evidence="1">Alanine racemase</fullName>
        <ecNumber evidence="1">5.1.1.1</ecNumber>
    </recommendedName>
</protein>